<organism>
    <name type="scientific">Locusta migratoria</name>
    <name type="common">Migratory locust</name>
    <dbReference type="NCBI Taxonomy" id="7004"/>
    <lineage>
        <taxon>Eukaryota</taxon>
        <taxon>Metazoa</taxon>
        <taxon>Ecdysozoa</taxon>
        <taxon>Arthropoda</taxon>
        <taxon>Hexapoda</taxon>
        <taxon>Insecta</taxon>
        <taxon>Pterygota</taxon>
        <taxon>Neoptera</taxon>
        <taxon>Polyneoptera</taxon>
        <taxon>Orthoptera</taxon>
        <taxon>Caelifera</taxon>
        <taxon>Acrididea</taxon>
        <taxon>Acridomorpha</taxon>
        <taxon>Acridoidea</taxon>
        <taxon>Acrididae</taxon>
        <taxon>Oedipodinae</taxon>
        <taxon>Locusta</taxon>
    </lineage>
</organism>
<evidence type="ECO:0000269" key="1">
    <source>
    </source>
</evidence>
<evidence type="ECO:0000305" key="2"/>
<comment type="tissue specificity">
    <text evidence="1">Found in the abdominal ganglia and perisympathetic organs. Not detected in the thoracic ganglia, subesophageal ganglion, corpora cardiaca, corpora allata, hypocerebral ganglion or frontal ganglion.</text>
</comment>
<comment type="mass spectrometry"/>
<sequence>TSSLFPHPRL</sequence>
<feature type="peptide" id="PRO_0000343525" description="Myotropin-2" evidence="1">
    <location>
        <begin position="1"/>
        <end position="10"/>
    </location>
</feature>
<feature type="modified residue" description="Leucine amide" evidence="1">
    <location>
        <position position="10"/>
    </location>
</feature>
<protein>
    <recommendedName>
        <fullName>Myotropin-2</fullName>
    </recommendedName>
    <alternativeName>
        <fullName>Scg-MT-2</fullName>
    </alternativeName>
</protein>
<keyword id="KW-0027">Amidation</keyword>
<keyword id="KW-0903">Direct protein sequencing</keyword>
<reference evidence="2" key="1">
    <citation type="journal article" date="2003" name="Biochem. Biophys. Res. Commun.">
        <title>Mass spectrometric analysis of the perisympathetic organs in locusts: identification of novel periviscerokinins.</title>
        <authorList>
            <person name="Clynen E."/>
            <person name="Huybrechts J."/>
            <person name="De Loof A."/>
            <person name="Schoofs L."/>
        </authorList>
    </citation>
    <scope>PROTEIN SEQUENCE</scope>
    <scope>TISSUE SPECIFICITY</scope>
    <scope>MASS SPECTROMETRY</scope>
    <scope>AMIDATION AT LEU-10</scope>
    <source>
        <tissue evidence="1">Abdominal perisympathetic organs</tissue>
    </source>
</reference>
<proteinExistence type="evidence at protein level"/>
<name>MYOT2_LOCMI</name>
<accession>P85866</accession>